<gene>
    <name type="primary">Igsf10</name>
    <name type="synonym">Cmf608</name>
</gene>
<dbReference type="EMBL" id="AY273816">
    <property type="protein sequence ID" value="AAQ16157.1"/>
    <property type="molecule type" value="mRNA"/>
</dbReference>
<dbReference type="RefSeq" id="NP_942063.1">
    <property type="nucleotide sequence ID" value="NM_198768.2"/>
</dbReference>
<dbReference type="SMR" id="Q6WRH9"/>
<dbReference type="FunCoup" id="Q6WRH9">
    <property type="interactions" value="298"/>
</dbReference>
<dbReference type="STRING" id="10116.ENSRNOP00000069220"/>
<dbReference type="GlyCosmos" id="Q6WRH9">
    <property type="glycosylation" value="11 sites, No reported glycans"/>
</dbReference>
<dbReference type="GlyGen" id="Q6WRH9">
    <property type="glycosylation" value="14 sites"/>
</dbReference>
<dbReference type="iPTMnet" id="Q6WRH9"/>
<dbReference type="PhosphoSitePlus" id="Q6WRH9"/>
<dbReference type="PaxDb" id="10116-ENSRNOP00000018629"/>
<dbReference type="GeneID" id="310448"/>
<dbReference type="KEGG" id="rno:310448"/>
<dbReference type="UCSC" id="RGD:735030">
    <property type="organism name" value="rat"/>
</dbReference>
<dbReference type="AGR" id="RGD:735030"/>
<dbReference type="CTD" id="285313"/>
<dbReference type="RGD" id="735030">
    <property type="gene designation" value="Igsf10"/>
</dbReference>
<dbReference type="eggNOG" id="KOG0619">
    <property type="taxonomic scope" value="Eukaryota"/>
</dbReference>
<dbReference type="InParanoid" id="Q6WRH9"/>
<dbReference type="PhylomeDB" id="Q6WRH9"/>
<dbReference type="PRO" id="PR:Q6WRH9"/>
<dbReference type="Proteomes" id="UP000002494">
    <property type="component" value="Unplaced"/>
</dbReference>
<dbReference type="GO" id="GO:0005576">
    <property type="term" value="C:extracellular region"/>
    <property type="evidence" value="ECO:0000250"/>
    <property type="project" value="UniProtKB"/>
</dbReference>
<dbReference type="GO" id="GO:0030154">
    <property type="term" value="P:cell differentiation"/>
    <property type="evidence" value="ECO:0007669"/>
    <property type="project" value="UniProtKB-KW"/>
</dbReference>
<dbReference type="GO" id="GO:0001503">
    <property type="term" value="P:ossification"/>
    <property type="evidence" value="ECO:0000314"/>
    <property type="project" value="MGI"/>
</dbReference>
<dbReference type="GO" id="GO:2001222">
    <property type="term" value="P:regulation of neuron migration"/>
    <property type="evidence" value="ECO:0000250"/>
    <property type="project" value="UniProtKB"/>
</dbReference>
<dbReference type="GO" id="GO:0042246">
    <property type="term" value="P:tissue regeneration"/>
    <property type="evidence" value="ECO:0000314"/>
    <property type="project" value="RGD"/>
</dbReference>
<dbReference type="CDD" id="cd00096">
    <property type="entry name" value="Ig"/>
    <property type="match status" value="2"/>
</dbReference>
<dbReference type="FunFam" id="2.60.40.10:FF:000621">
    <property type="entry name" value="Immunoglobulin superfamily member 10"/>
    <property type="match status" value="1"/>
</dbReference>
<dbReference type="FunFam" id="2.60.40.10:FF:001046">
    <property type="entry name" value="Immunoglobulin superfamily member 10"/>
    <property type="match status" value="1"/>
</dbReference>
<dbReference type="FunFam" id="2.60.40.10:FF:001065">
    <property type="entry name" value="Immunoglobulin superfamily member 10"/>
    <property type="match status" value="1"/>
</dbReference>
<dbReference type="FunFam" id="2.60.40.10:FF:001188">
    <property type="entry name" value="Immunoglobulin superfamily member 10"/>
    <property type="match status" value="1"/>
</dbReference>
<dbReference type="FunFam" id="2.60.40.10:FF:001224">
    <property type="entry name" value="Immunoglobulin superfamily member 10"/>
    <property type="match status" value="1"/>
</dbReference>
<dbReference type="FunFam" id="2.60.40.10:FF:001262">
    <property type="entry name" value="Immunoglobulin superfamily member 10"/>
    <property type="match status" value="1"/>
</dbReference>
<dbReference type="FunFam" id="2.60.40.10:FF:001373">
    <property type="entry name" value="Immunoglobulin superfamily member 10"/>
    <property type="match status" value="1"/>
</dbReference>
<dbReference type="FunFam" id="2.60.40.10:FF:001427">
    <property type="entry name" value="Immunoglobulin superfamily member 10"/>
    <property type="match status" value="1"/>
</dbReference>
<dbReference type="FunFam" id="3.80.10.10:FF:000103">
    <property type="entry name" value="Immunoglobulin superfamily member 10"/>
    <property type="match status" value="1"/>
</dbReference>
<dbReference type="FunFam" id="3.80.10.10:FF:000227">
    <property type="entry name" value="Immunoglobulin superfamily member 10"/>
    <property type="match status" value="1"/>
</dbReference>
<dbReference type="FunFam" id="2.60.40.10:FF:000537">
    <property type="entry name" value="immunoglobulin superfamily member 10"/>
    <property type="match status" value="1"/>
</dbReference>
<dbReference type="FunFam" id="2.60.40.10:FF:000925">
    <property type="entry name" value="immunoglobulin superfamily member 10"/>
    <property type="match status" value="1"/>
</dbReference>
<dbReference type="FunFam" id="2.60.40.10:FF:001187">
    <property type="entry name" value="immunoglobulin superfamily member 10"/>
    <property type="match status" value="1"/>
</dbReference>
<dbReference type="FunFam" id="2.60.40.10:FF:001323">
    <property type="entry name" value="immunoglobulin superfamily member 10"/>
    <property type="match status" value="1"/>
</dbReference>
<dbReference type="Gene3D" id="2.60.40.10">
    <property type="entry name" value="Immunoglobulins"/>
    <property type="match status" value="12"/>
</dbReference>
<dbReference type="Gene3D" id="3.80.10.10">
    <property type="entry name" value="Ribonuclease Inhibitor"/>
    <property type="match status" value="2"/>
</dbReference>
<dbReference type="InterPro" id="IPR000483">
    <property type="entry name" value="Cys-rich_flank_reg_C"/>
</dbReference>
<dbReference type="InterPro" id="IPR007110">
    <property type="entry name" value="Ig-like_dom"/>
</dbReference>
<dbReference type="InterPro" id="IPR036179">
    <property type="entry name" value="Ig-like_dom_sf"/>
</dbReference>
<dbReference type="InterPro" id="IPR013783">
    <property type="entry name" value="Ig-like_fold"/>
</dbReference>
<dbReference type="InterPro" id="IPR013098">
    <property type="entry name" value="Ig_I-set"/>
</dbReference>
<dbReference type="InterPro" id="IPR003599">
    <property type="entry name" value="Ig_sub"/>
</dbReference>
<dbReference type="InterPro" id="IPR003598">
    <property type="entry name" value="Ig_sub2"/>
</dbReference>
<dbReference type="InterPro" id="IPR013106">
    <property type="entry name" value="Ig_V-set"/>
</dbReference>
<dbReference type="InterPro" id="IPR001611">
    <property type="entry name" value="Leu-rich_rpt"/>
</dbReference>
<dbReference type="InterPro" id="IPR003591">
    <property type="entry name" value="Leu-rich_rpt_typical-subtyp"/>
</dbReference>
<dbReference type="InterPro" id="IPR050467">
    <property type="entry name" value="LRFN"/>
</dbReference>
<dbReference type="InterPro" id="IPR032675">
    <property type="entry name" value="LRR_dom_sf"/>
</dbReference>
<dbReference type="InterPro" id="IPR000372">
    <property type="entry name" value="LRRNT"/>
</dbReference>
<dbReference type="PANTHER" id="PTHR45842:SF12">
    <property type="entry name" value="KEKKON 5, ISOFORM A"/>
    <property type="match status" value="1"/>
</dbReference>
<dbReference type="PANTHER" id="PTHR45842">
    <property type="entry name" value="SYNAPTIC ADHESION-LIKE MOLECULE SALM"/>
    <property type="match status" value="1"/>
</dbReference>
<dbReference type="Pfam" id="PF07679">
    <property type="entry name" value="I-set"/>
    <property type="match status" value="6"/>
</dbReference>
<dbReference type="Pfam" id="PF13927">
    <property type="entry name" value="Ig_3"/>
    <property type="match status" value="6"/>
</dbReference>
<dbReference type="Pfam" id="PF13855">
    <property type="entry name" value="LRR_8"/>
    <property type="match status" value="1"/>
</dbReference>
<dbReference type="SMART" id="SM00409">
    <property type="entry name" value="IG"/>
    <property type="match status" value="12"/>
</dbReference>
<dbReference type="SMART" id="SM00408">
    <property type="entry name" value="IGc2"/>
    <property type="match status" value="12"/>
</dbReference>
<dbReference type="SMART" id="SM00406">
    <property type="entry name" value="IGv"/>
    <property type="match status" value="5"/>
</dbReference>
<dbReference type="SMART" id="SM00369">
    <property type="entry name" value="LRR_TYP"/>
    <property type="match status" value="5"/>
</dbReference>
<dbReference type="SMART" id="SM00082">
    <property type="entry name" value="LRRCT"/>
    <property type="match status" value="1"/>
</dbReference>
<dbReference type="SMART" id="SM00013">
    <property type="entry name" value="LRRNT"/>
    <property type="match status" value="1"/>
</dbReference>
<dbReference type="SUPFAM" id="SSF48726">
    <property type="entry name" value="Immunoglobulin"/>
    <property type="match status" value="12"/>
</dbReference>
<dbReference type="SUPFAM" id="SSF52058">
    <property type="entry name" value="L domain-like"/>
    <property type="match status" value="1"/>
</dbReference>
<dbReference type="PROSITE" id="PS50835">
    <property type="entry name" value="IG_LIKE"/>
    <property type="match status" value="12"/>
</dbReference>
<sequence>MQVRGREVSGLLISLTAVCLVVTPGSRACPRRCACYVPTEVHCTFRYLTSIPDGIPANVERINLGYNSLTRLTENDFDGLSKLELLMLHSNGIHRVSDKTFSGLQSLQVLKMSYNKVQIIRKDTFYGLGSLVRLHLDHNNIEFINPEAFYGLTSLRLVHLEGNRLTKLHPDTFVSLSYLQIFKTSFIKYLFLSDNFLTSLPKEMVSYMPNLESLYLHGNPWTCDCHLKWLSEWMQGNPDIIKCKKDRSSSSPQQCPLCMNPRISKGRPFAMVPSGAFLCTKPTIDPSLKSKSLVTQEDNGSASTSPQDFIEPFGSLSLNMTDLSGNKADMVCSIQKPSRTSPTAFTEENDYIMLNASFSTNLVCSVDYNHIQPVWQLLALYSDSPLILERKPQLTETPSLSSRYKQVALRPEDIFTSIEADVRADPFWFQQEKIVLQLNRTATTLSTLQIQFSTDAQIALPRAEMRAERLKWTMILMMNNPKLERTVLVGGTIALSCPGKGDPSPHLEWLLADGSKVRAPYVSEDGRILIDKNGKLELQMADSFDAGLYHCISTNDADADVLTYRITVVEPYGESTHDSGVQHTVVTGETLDLPCLSTGVPDASISWILPGNTVFSQPSRDRQILNNGTLRILQVTPKDQGHYQCVAANPSGADFSSFKVSVQKKGQRMVEHDREAGGSGLGEPNSSVSLKQPASLKLSASALTGSEAGKQVSGVHRKNKHRDLIHRRRGDSTLRRFREHRRQLPLSARRIDPQRWAALLEKAKKNSVPKKQENTTVKPVPLAVPLVELTDEEKDASGMIPPDEEFMVLKTKASGVPGRSPTADSGPVNHGFMTSIASGTEVSTVNPQTLQSEHLPDFKLFSVTNGTAVTKSMNPSIASKIEDTTNQNPIIIFPSVAEIRDSAQAGRASSQSAHPVTGGNMATYGHTNTYSSFTSKASTVLQPINPTESYGPQIPITGVSRPSSSDISSHTTADPSFSSHPSGSHTTASSLFHIPRNNNTGNFPLSRHLGRERTIWSRGRVKNPHRTPVLRRHRHRTVRPAIKGPANKNVSQVPATEYPGMCHTCPSAEGLTVATAALSVPSSSHSALPKTNNVGVIAEESTTVVKKPLLLFKDKQNVDIEIITTTTKYSGGESNHVIPTEASMTSAPTSVSLGKSPVDNSGHLSMPGTIQTGKDSVETTPLPSPLSTPSIPTSTKFSKRKTPLHQIFVNNQKKEGMLKNPYQFGLQKNPAAKLPKIAPLLPTGQSSPSDSTTLLTSPPPALSTTMAATQNKGTEVVSGARSLSAGKKQPFTNSSPVLPSTISKRSNTLNFLSTETPTVTSPTATASVIMSETQRTRSKEAKDQIKGPRKNRNNANTTPRQVSGYSAYSALTTADTPLAFSHSPRQDDGGNVSAVAYHSTTSLLAITELFEKYTQTLGNTTALETTLLSKSQESTTVKRASDTPPPLLSSGAPPVPTPSPPPFTKGVVTDSKVTSAFQMTSNRVVTIYESSRHNTDLQQPSAEASPNPEIITGTTDSPSNLFPSTSVPALRVDKPQNSKWKPSPWPEHKYQLKSYSETIEKGKRPAVSMSPHLSLPEASTHASHWNTQKHAEKSVFDKKPGQNPTSKHLPYVSLPKTLLKKPRIIGGKAASFTVPANSDVFLPCEAVGDPLPIIHWTRVSSGLEISQGTQKSRFHVLPNGTLSIQRVSIQDRGQYLCSAFNPLGVDHFHVSLSVVFYPARILDRHVKEITVHFGSTVELKCRVEGMPRPTVSWILANQTVVSETAKGSRKVWVTPDGTLIIYNLSLYDRGFYKCVASNPSGQDSLLVKIQVITAPPVIIEQKRQAIVGVLGGSLKLPCTAKGTPQPSVHWVLYDGTELKPLQLTHSRFFLYPNGTLYIRSIAPSVRGTYECIATSSSGSERRVVILTVEEGETIPRIETASQKWTEVNLGEKLLLNCSATGDPKPRIIWRLPSKAVIDQWHRMGSRIHVYPNGSLVVGSVTEKDAGDYLCVARNKMGDDLVLMHVRLRLTPAKIEQKQYFKKQVLHGKDFQVDCKASGSPVPEVSWSLPDGTVLNNVAQADDSGYRTKRYTLFHNGTLYFNNVGMAEEGDYICSAQNTLGKDEMKVHLTVLTAIPRIRQSYKTTMRLRAGETAVLDCEVTGEPKPNVFWLLPSNNVISFSNDRFTFHANRTLSIHKVKPLDSGDYVCVAQNPSGDDTKTYKLDIVSKPPLINGLYANKTVIKATAIRHSKKYFDCRADGIPSSQVTWIMPGNIFLPAPYFGSRVTVHPNGTLEMRNIRLSDSADFTCVVRSEGGESVLVVQLEVLEMLRRPTFRNPFNEKVIAQAGKPVALNCSVDGNPPPEITWILPDGTQFANRPHNSPYLMAGNGSLILYKATRNKSGKYRCAARNKVGYIEKLILLEIGQKPVILTYEPGMVKSVSGEPLSLHCVSDGIPKPNVKWTTPGGHVIDRPQVDGKYILHENGTLVIKATTAHDQGNYICRAQNSVGQAVISVSVMVVAYPPRIINYLPRNMLRRTGEAMQLHCVALGIPKPKVTWETPRHSLLSKATARKPHRSEMLHPQGTLVIQNLQTSDSGVYKCRAQNLLGTDYATTYIQVL</sequence>
<keyword id="KW-0217">Developmental protein</keyword>
<keyword id="KW-0221">Differentiation</keyword>
<keyword id="KW-1015">Disulfide bond</keyword>
<keyword id="KW-0325">Glycoprotein</keyword>
<keyword id="KW-0393">Immunoglobulin domain</keyword>
<keyword id="KW-0433">Leucine-rich repeat</keyword>
<keyword id="KW-0892">Osteogenesis</keyword>
<keyword id="KW-0597">Phosphoprotein</keyword>
<keyword id="KW-1185">Reference proteome</keyword>
<keyword id="KW-0677">Repeat</keyword>
<keyword id="KW-0964">Secreted</keyword>
<keyword id="KW-0732">Signal</keyword>
<reference key="1">
    <citation type="journal article" date="2004" name="Bone">
        <title>CMF608 -- a novel mechanical strain-induced bone-specific protein expressed in early osteochondroprogenitor cells.</title>
        <authorList>
            <person name="Segev O."/>
            <person name="Samach A."/>
            <person name="Faerman A."/>
            <person name="Kalinski H."/>
            <person name="Beiman M."/>
            <person name="Gelfand A."/>
            <person name="Turam H."/>
            <person name="Boguslavsky S."/>
            <person name="Moshayov A."/>
            <person name="Gottlieb H."/>
            <person name="Kazanov E."/>
            <person name="Nevo Z."/>
            <person name="Robinson D."/>
            <person name="Skaliter R."/>
            <person name="Einat P."/>
            <person name="Binderman I."/>
            <person name="Feinstein E."/>
        </authorList>
    </citation>
    <scope>NUCLEOTIDE SEQUENCE [LARGE SCALE MRNA]</scope>
    <scope>FUNCTION</scope>
    <scope>TISSUE SPECIFICITY</scope>
    <scope>INDUCTION</scope>
    <source>
        <strain>Sprague-Dawley</strain>
    </source>
</reference>
<reference key="2">
    <citation type="journal article" date="2006" name="Proc. Natl. Acad. Sci. U.S.A.">
        <title>Quantitative phosphoproteomics of vasopressin-sensitive renal cells: regulation of aquaporin-2 phosphorylation at two sites.</title>
        <authorList>
            <person name="Hoffert J.D."/>
            <person name="Pisitkun T."/>
            <person name="Wang G."/>
            <person name="Shen R.-F."/>
            <person name="Knepper M.A."/>
        </authorList>
    </citation>
    <scope>PHOSPHORYLATION [LARGE SCALE ANALYSIS] AT TYR-2577</scope>
    <scope>IDENTIFICATION BY MASS SPECTROMETRY [LARGE SCALE ANALYSIS]</scope>
</reference>
<evidence type="ECO:0000250" key="1">
    <source>
        <dbReference type="UniProtKB" id="Q3V1M1"/>
    </source>
</evidence>
<evidence type="ECO:0000250" key="2">
    <source>
        <dbReference type="UniProtKB" id="Q6WRI0"/>
    </source>
</evidence>
<evidence type="ECO:0000255" key="3"/>
<evidence type="ECO:0000255" key="4">
    <source>
        <dbReference type="PROSITE-ProRule" id="PRU00114"/>
    </source>
</evidence>
<evidence type="ECO:0000256" key="5">
    <source>
        <dbReference type="SAM" id="MobiDB-lite"/>
    </source>
</evidence>
<evidence type="ECO:0000269" key="6">
    <source>
    </source>
</evidence>
<evidence type="ECO:0007744" key="7">
    <source>
    </source>
</evidence>
<protein>
    <recommendedName>
        <fullName>Immunoglobulin superfamily member 10</fullName>
        <shortName>IgSF10</shortName>
    </recommendedName>
    <alternativeName>
        <fullName>Calvaria mechanical force protein 608</fullName>
        <shortName>CMF608</shortName>
    </alternativeName>
</protein>
<accession>Q6WRH9</accession>
<organism>
    <name type="scientific">Rattus norvegicus</name>
    <name type="common">Rat</name>
    <dbReference type="NCBI Taxonomy" id="10116"/>
    <lineage>
        <taxon>Eukaryota</taxon>
        <taxon>Metazoa</taxon>
        <taxon>Chordata</taxon>
        <taxon>Craniata</taxon>
        <taxon>Vertebrata</taxon>
        <taxon>Euteleostomi</taxon>
        <taxon>Mammalia</taxon>
        <taxon>Eutheria</taxon>
        <taxon>Euarchontoglires</taxon>
        <taxon>Glires</taxon>
        <taxon>Rodentia</taxon>
        <taxon>Myomorpha</taxon>
        <taxon>Muroidea</taxon>
        <taxon>Muridae</taxon>
        <taxon>Murinae</taxon>
        <taxon>Rattus</taxon>
    </lineage>
</organism>
<proteinExistence type="evidence at protein level"/>
<feature type="signal peptide" evidence="3">
    <location>
        <begin position="1"/>
        <end position="28"/>
    </location>
</feature>
<feature type="chain" id="PRO_0000286819" description="Immunoglobulin superfamily member 10">
    <location>
        <begin position="29"/>
        <end position="2597"/>
    </location>
</feature>
<feature type="domain" description="LRRNT">
    <location>
        <begin position="29"/>
        <end position="56"/>
    </location>
</feature>
<feature type="repeat" description="LRR 1">
    <location>
        <begin position="58"/>
        <end position="79"/>
    </location>
</feature>
<feature type="repeat" description="LRR 2">
    <location>
        <begin position="82"/>
        <end position="103"/>
    </location>
</feature>
<feature type="repeat" description="LRR 3">
    <location>
        <begin position="106"/>
        <end position="127"/>
    </location>
</feature>
<feature type="repeat" description="LRR 4">
    <location>
        <begin position="130"/>
        <end position="151"/>
    </location>
</feature>
<feature type="repeat" description="LRR 5">
    <location>
        <begin position="154"/>
        <end position="175"/>
    </location>
</feature>
<feature type="repeat" description="LRR 6">
    <location>
        <begin position="186"/>
        <end position="207"/>
    </location>
</feature>
<feature type="domain" description="LRRCT">
    <location>
        <begin position="219"/>
        <end position="281"/>
    </location>
</feature>
<feature type="domain" description="Ig-like C2-type 1">
    <location>
        <begin position="461"/>
        <end position="567"/>
    </location>
</feature>
<feature type="domain" description="Ig-like C2-type 2">
    <location>
        <begin position="571"/>
        <end position="661"/>
    </location>
</feature>
<feature type="domain" description="Ig-like C2-type 3">
    <location>
        <begin position="1622"/>
        <end position="1713"/>
    </location>
</feature>
<feature type="domain" description="Ig-like C2-type 4">
    <location>
        <begin position="1718"/>
        <end position="1810"/>
    </location>
</feature>
<feature type="domain" description="Ig-like C2-type 5">
    <location>
        <begin position="1815"/>
        <end position="1907"/>
    </location>
</feature>
<feature type="domain" description="Ig-like C2-type 6">
    <location>
        <begin position="1915"/>
        <end position="2008"/>
    </location>
</feature>
<feature type="domain" description="Ig-like C2-type 7">
    <location>
        <begin position="2011"/>
        <end position="2109"/>
    </location>
</feature>
<feature type="domain" description="Ig-like C2-type 8">
    <location>
        <begin position="2115"/>
        <end position="2203"/>
    </location>
</feature>
<feature type="domain" description="Ig-like C2-type 9">
    <location>
        <begin position="2208"/>
        <end position="2305"/>
    </location>
</feature>
<feature type="domain" description="Ig-like C2-type 10">
    <location>
        <begin position="2311"/>
        <end position="2401"/>
    </location>
</feature>
<feature type="domain" description="Ig-like C2-type 11">
    <location>
        <begin position="2406"/>
        <end position="2492"/>
    </location>
</feature>
<feature type="domain" description="Ig-like C2-type 12">
    <location>
        <begin position="2502"/>
        <end position="2597"/>
    </location>
</feature>
<feature type="region of interest" description="Disordered" evidence="5">
    <location>
        <begin position="667"/>
        <end position="690"/>
    </location>
</feature>
<feature type="region of interest" description="Disordered" evidence="5">
    <location>
        <begin position="946"/>
        <end position="995"/>
    </location>
</feature>
<feature type="region of interest" description="Disordered" evidence="5">
    <location>
        <begin position="1160"/>
        <end position="1199"/>
    </location>
</feature>
<feature type="region of interest" description="Disordered" evidence="5">
    <location>
        <begin position="1281"/>
        <end position="1302"/>
    </location>
</feature>
<feature type="region of interest" description="Disordered" evidence="5">
    <location>
        <begin position="1314"/>
        <end position="1361"/>
    </location>
</feature>
<feature type="region of interest" description="Disordered" evidence="5">
    <location>
        <begin position="1430"/>
        <end position="1466"/>
    </location>
</feature>
<feature type="region of interest" description="Disordered" evidence="5">
    <location>
        <begin position="1493"/>
        <end position="1521"/>
    </location>
</feature>
<feature type="region of interest" description="Disordered" evidence="5">
    <location>
        <begin position="1561"/>
        <end position="1609"/>
    </location>
</feature>
<feature type="compositionally biased region" description="Polar residues" evidence="5">
    <location>
        <begin position="960"/>
        <end position="995"/>
    </location>
</feature>
<feature type="compositionally biased region" description="Polar residues" evidence="5">
    <location>
        <begin position="1160"/>
        <end position="1174"/>
    </location>
</feature>
<feature type="compositionally biased region" description="Low complexity" evidence="5">
    <location>
        <begin position="1179"/>
        <end position="1195"/>
    </location>
</feature>
<feature type="compositionally biased region" description="Polar residues" evidence="5">
    <location>
        <begin position="1290"/>
        <end position="1302"/>
    </location>
</feature>
<feature type="compositionally biased region" description="Low complexity" evidence="5">
    <location>
        <begin position="1316"/>
        <end position="1328"/>
    </location>
</feature>
<feature type="compositionally biased region" description="Basic and acidic residues" evidence="5">
    <location>
        <begin position="1334"/>
        <end position="1346"/>
    </location>
</feature>
<feature type="compositionally biased region" description="Pro residues" evidence="5">
    <location>
        <begin position="1443"/>
        <end position="1463"/>
    </location>
</feature>
<feature type="compositionally biased region" description="Polar residues" evidence="5">
    <location>
        <begin position="1512"/>
        <end position="1521"/>
    </location>
</feature>
<feature type="compositionally biased region" description="Basic and acidic residues" evidence="5">
    <location>
        <begin position="1589"/>
        <end position="1600"/>
    </location>
</feature>
<feature type="modified residue" description="Phosphotyrosine" evidence="7">
    <location>
        <position position="2577"/>
    </location>
</feature>
<feature type="glycosylation site" description="N-linked (GlcNAc...) asparagine" evidence="3">
    <location>
        <position position="627"/>
    </location>
</feature>
<feature type="glycosylation site" description="N-linked (GlcNAc...) asparagine" evidence="3">
    <location>
        <position position="685"/>
    </location>
</feature>
<feature type="glycosylation site" description="N-linked (GlcNAc...) asparagine" evidence="3">
    <location>
        <position position="1049"/>
    </location>
</feature>
<feature type="glycosylation site" description="N-linked (GlcNAc...) asparagine" evidence="3">
    <location>
        <position position="1679"/>
    </location>
</feature>
<feature type="glycosylation site" description="N-linked (GlcNAc...) asparagine" evidence="3">
    <location>
        <position position="1783"/>
    </location>
</feature>
<feature type="glycosylation site" description="N-linked (GlcNAc...) asparagine" evidence="3">
    <location>
        <position position="1873"/>
    </location>
</feature>
<feature type="glycosylation site" description="N-linked (GlcNAc...) asparagine" evidence="3">
    <location>
        <position position="1936"/>
    </location>
</feature>
<feature type="glycosylation site" description="N-linked (GlcNAc...) asparagine" evidence="3">
    <location>
        <position position="2075"/>
    </location>
</feature>
<feature type="glycosylation site" description="N-linked (GlcNAc...) asparagine" evidence="3">
    <location>
        <position position="2269"/>
    </location>
</feature>
<feature type="glycosylation site" description="N-linked (GlcNAc...) asparagine" evidence="3">
    <location>
        <position position="2332"/>
    </location>
</feature>
<feature type="glycosylation site" description="N-linked (GlcNAc...) asparagine" evidence="3">
    <location>
        <position position="2367"/>
    </location>
</feature>
<feature type="disulfide bond" evidence="4">
    <location>
        <begin position="497"/>
        <end position="551"/>
    </location>
</feature>
<feature type="disulfide bond" evidence="4">
    <location>
        <begin position="595"/>
        <end position="645"/>
    </location>
</feature>
<feature type="disulfide bond" evidence="4">
    <location>
        <begin position="1644"/>
        <end position="1697"/>
    </location>
</feature>
<feature type="disulfide bond" evidence="4">
    <location>
        <begin position="1741"/>
        <end position="1794"/>
    </location>
</feature>
<feature type="disulfide bond" evidence="4">
    <location>
        <begin position="1838"/>
        <end position="1891"/>
    </location>
</feature>
<feature type="disulfide bond" evidence="4">
    <location>
        <begin position="1937"/>
        <end position="1990"/>
    </location>
</feature>
<feature type="disulfide bond" evidence="4">
    <location>
        <begin position="2034"/>
        <end position="2093"/>
    </location>
</feature>
<feature type="disulfide bond" evidence="4">
    <location>
        <begin position="2137"/>
        <end position="2187"/>
    </location>
</feature>
<feature type="disulfide bond" evidence="4">
    <location>
        <begin position="2235"/>
        <end position="2287"/>
    </location>
</feature>
<feature type="disulfide bond" evidence="4">
    <location>
        <begin position="2333"/>
        <end position="2385"/>
    </location>
</feature>
<feature type="disulfide bond" evidence="4">
    <location>
        <begin position="2428"/>
        <end position="2480"/>
    </location>
</feature>
<feature type="disulfide bond" evidence="4">
    <location>
        <begin position="2524"/>
        <end position="2579"/>
    </location>
</feature>
<comment type="function">
    <text evidence="1 6">Involved in the control of early migration of neurons expressing gonadotropin-releasing hormone (GNRH neurons) (By similarity). May be involved in the maintenance of osteochondroprogenitor cells pool (PubMed:14962803).</text>
</comment>
<comment type="subcellular location">
    <subcellularLocation>
        <location evidence="2">Secreted</location>
    </subcellularLocation>
</comment>
<comment type="tissue specificity">
    <text evidence="6">Expressed in bone. Main expression is present in mesenchymal osteochondroprogenitors with fibroblast-like morphology abundant in the regions of active bone modeling and remodeling.</text>
</comment>
<comment type="induction">
    <text evidence="6">By estrogen and blood loss.</text>
</comment>
<comment type="PTM">
    <text>N-terminally cleaved to produce a form of around 663 residues.</text>
</comment>
<name>IGS10_RAT</name>